<sequence>MKSQQEQHFDYVKIGIASPERVRQWGERTLPNGQTVGEVTKPETINYRTLKPEMDGLFCERIFGPAKDWECHCGKYKRVRHRGIVCERCGVEVTESRVRRHRMGYIKLAAAVTHVWYLKGIPSYLSILLDMALRDVEQIVYFNAYVVLDPGNATNLSYKQLLTEDQWLEIEEQLYSEDSQLEDVEVGIGAEAIERLLQELELEAVAEELREGIANSKGQKRAKLIKRLRVIDNFIATGARPEWMVLNSIPVIPPDLRPMVQLDGGRFATSDLNDLYRRVINRNNRLARLQEILAPEIIVRNEKRMLQEAVDALIDNGRRGRTVVGANNRPLKSLSDIIEGKQGRFRQNLLGKRVDYSGRSVIVVGPKLKIYQCGLPREMAIELFQPFVIQRLIKSTIVSNIKAAKKLIQRGDESVWDVLAEVITGHPVLLNRAPTLHRLGIQAFEPILVEGRAIQLHPLVCPAFNADFDGDQMAVHVPLSLEAQAEARLLMLACHNILSPATGKPIVAPSQDMVLGCYYLTAENPGAQRGAGRYFSSMDDALRAYEQGDVDLHAYVWLRYLGDVETNEADDRVLESETLEDGSILKIYRERKVRETAEGEMISQFIRTTPGRIIYNKTIQDALDLTERTLPEGLPV</sequence>
<proteinExistence type="inferred from homology"/>
<name>RPOC1_PICP2</name>
<gene>
    <name evidence="1" type="primary">rpoC1</name>
    <name type="ordered locus">SYNPCC7002_A2044</name>
</gene>
<evidence type="ECO:0000255" key="1">
    <source>
        <dbReference type="HAMAP-Rule" id="MF_01323"/>
    </source>
</evidence>
<organism>
    <name type="scientific">Picosynechococcus sp. (strain ATCC 27264 / PCC 7002 / PR-6)</name>
    <name type="common">Agmenellum quadruplicatum</name>
    <dbReference type="NCBI Taxonomy" id="32049"/>
    <lineage>
        <taxon>Bacteria</taxon>
        <taxon>Bacillati</taxon>
        <taxon>Cyanobacteriota</taxon>
        <taxon>Cyanophyceae</taxon>
        <taxon>Oscillatoriophycideae</taxon>
        <taxon>Chroococcales</taxon>
        <taxon>Geminocystaceae</taxon>
        <taxon>Picosynechococcus</taxon>
    </lineage>
</organism>
<comment type="function">
    <text evidence="1">DNA-dependent RNA polymerase catalyzes the transcription of DNA into RNA using the four ribonucleoside triphosphates as substrates.</text>
</comment>
<comment type="catalytic activity">
    <reaction evidence="1">
        <text>RNA(n) + a ribonucleoside 5'-triphosphate = RNA(n+1) + diphosphate</text>
        <dbReference type="Rhea" id="RHEA:21248"/>
        <dbReference type="Rhea" id="RHEA-COMP:14527"/>
        <dbReference type="Rhea" id="RHEA-COMP:17342"/>
        <dbReference type="ChEBI" id="CHEBI:33019"/>
        <dbReference type="ChEBI" id="CHEBI:61557"/>
        <dbReference type="ChEBI" id="CHEBI:140395"/>
        <dbReference type="EC" id="2.7.7.6"/>
    </reaction>
</comment>
<comment type="cofactor">
    <cofactor evidence="1">
        <name>Mg(2+)</name>
        <dbReference type="ChEBI" id="CHEBI:18420"/>
    </cofactor>
    <text evidence="1">Binds 1 Mg(2+) ion per subunit.</text>
</comment>
<comment type="cofactor">
    <cofactor evidence="1">
        <name>Zn(2+)</name>
        <dbReference type="ChEBI" id="CHEBI:29105"/>
    </cofactor>
    <text evidence="1">Binds 1 Zn(2+) ion per subunit.</text>
</comment>
<comment type="subunit">
    <text evidence="1">In cyanobacteria the RNAP catalytic core is composed of 2 alpha, 1 beta, 1 beta', 1 gamma and 1 omega subunit. When a sigma factor is associated with the core the holoenzyme is formed, which can initiate transcription.</text>
</comment>
<comment type="similarity">
    <text evidence="1">Belongs to the RNA polymerase beta' chain family. RpoC1 subfamily.</text>
</comment>
<accession>Q55085</accession>
<accession>B1XHW2</accession>
<dbReference type="EC" id="2.7.7.6" evidence="1"/>
<dbReference type="EMBL" id="CP000951">
    <property type="protein sequence ID" value="ACB00031.1"/>
    <property type="molecule type" value="Genomic_DNA"/>
</dbReference>
<dbReference type="EMBL" id="U52345">
    <property type="protein sequence ID" value="AAA97921.1"/>
    <property type="molecule type" value="Genomic_DNA"/>
</dbReference>
<dbReference type="RefSeq" id="WP_012307653.1">
    <property type="nucleotide sequence ID" value="NZ_JAHHPU010000002.1"/>
</dbReference>
<dbReference type="SMR" id="Q55085"/>
<dbReference type="STRING" id="32049.SYNPCC7002_A2044"/>
<dbReference type="KEGG" id="syp:SYNPCC7002_A2044"/>
<dbReference type="eggNOG" id="COG0086">
    <property type="taxonomic scope" value="Bacteria"/>
</dbReference>
<dbReference type="HOGENOM" id="CLU_030022_2_0_3"/>
<dbReference type="Proteomes" id="UP000001688">
    <property type="component" value="Chromosome"/>
</dbReference>
<dbReference type="GO" id="GO:0000428">
    <property type="term" value="C:DNA-directed RNA polymerase complex"/>
    <property type="evidence" value="ECO:0007669"/>
    <property type="project" value="UniProtKB-KW"/>
</dbReference>
<dbReference type="GO" id="GO:0003677">
    <property type="term" value="F:DNA binding"/>
    <property type="evidence" value="ECO:0007669"/>
    <property type="project" value="UniProtKB-UniRule"/>
</dbReference>
<dbReference type="GO" id="GO:0003899">
    <property type="term" value="F:DNA-directed RNA polymerase activity"/>
    <property type="evidence" value="ECO:0007669"/>
    <property type="project" value="UniProtKB-UniRule"/>
</dbReference>
<dbReference type="GO" id="GO:0000287">
    <property type="term" value="F:magnesium ion binding"/>
    <property type="evidence" value="ECO:0007669"/>
    <property type="project" value="UniProtKB-UniRule"/>
</dbReference>
<dbReference type="GO" id="GO:0008270">
    <property type="term" value="F:zinc ion binding"/>
    <property type="evidence" value="ECO:0007669"/>
    <property type="project" value="UniProtKB-UniRule"/>
</dbReference>
<dbReference type="GO" id="GO:0006351">
    <property type="term" value="P:DNA-templated transcription"/>
    <property type="evidence" value="ECO:0007669"/>
    <property type="project" value="UniProtKB-UniRule"/>
</dbReference>
<dbReference type="Gene3D" id="1.10.40.90">
    <property type="match status" value="1"/>
</dbReference>
<dbReference type="Gene3D" id="2.40.40.20">
    <property type="match status" value="1"/>
</dbReference>
<dbReference type="Gene3D" id="4.10.860.120">
    <property type="entry name" value="RNA polymerase II, clamp domain"/>
    <property type="match status" value="1"/>
</dbReference>
<dbReference type="Gene3D" id="1.10.274.100">
    <property type="entry name" value="RNA polymerase Rpb1, domain 3"/>
    <property type="match status" value="1"/>
</dbReference>
<dbReference type="HAMAP" id="MF_01323">
    <property type="entry name" value="RNApol_bact_RpoC1"/>
    <property type="match status" value="1"/>
</dbReference>
<dbReference type="InterPro" id="IPR012755">
    <property type="entry name" value="DNA-dir_RpoC1_gamma"/>
</dbReference>
<dbReference type="InterPro" id="IPR045867">
    <property type="entry name" value="DNA-dir_RpoC_beta_prime"/>
</dbReference>
<dbReference type="InterPro" id="IPR000722">
    <property type="entry name" value="RNA_pol_asu"/>
</dbReference>
<dbReference type="InterPro" id="IPR006592">
    <property type="entry name" value="RNA_pol_N"/>
</dbReference>
<dbReference type="InterPro" id="IPR007080">
    <property type="entry name" value="RNA_pol_Rpb1_1"/>
</dbReference>
<dbReference type="InterPro" id="IPR007066">
    <property type="entry name" value="RNA_pol_Rpb1_3"/>
</dbReference>
<dbReference type="InterPro" id="IPR042102">
    <property type="entry name" value="RNA_pol_Rpb1_3_sf"/>
</dbReference>
<dbReference type="InterPro" id="IPR044893">
    <property type="entry name" value="RNA_pol_Rpb1_clamp_domain"/>
</dbReference>
<dbReference type="InterPro" id="IPR034678">
    <property type="entry name" value="RNApol_RpoC1"/>
</dbReference>
<dbReference type="NCBIfam" id="NF002729">
    <property type="entry name" value="PRK02625.1"/>
    <property type="match status" value="1"/>
</dbReference>
<dbReference type="NCBIfam" id="TIGR02387">
    <property type="entry name" value="rpoC1_cyan"/>
    <property type="match status" value="1"/>
</dbReference>
<dbReference type="PANTHER" id="PTHR19376">
    <property type="entry name" value="DNA-DIRECTED RNA POLYMERASE"/>
    <property type="match status" value="1"/>
</dbReference>
<dbReference type="PANTHER" id="PTHR19376:SF54">
    <property type="entry name" value="DNA-DIRECTED RNA POLYMERASE SUBUNIT BETA"/>
    <property type="match status" value="1"/>
</dbReference>
<dbReference type="Pfam" id="PF04997">
    <property type="entry name" value="RNA_pol_Rpb1_1"/>
    <property type="match status" value="1"/>
</dbReference>
<dbReference type="Pfam" id="PF00623">
    <property type="entry name" value="RNA_pol_Rpb1_2"/>
    <property type="match status" value="2"/>
</dbReference>
<dbReference type="Pfam" id="PF04983">
    <property type="entry name" value="RNA_pol_Rpb1_3"/>
    <property type="match status" value="1"/>
</dbReference>
<dbReference type="SMART" id="SM00663">
    <property type="entry name" value="RPOLA_N"/>
    <property type="match status" value="1"/>
</dbReference>
<dbReference type="SUPFAM" id="SSF64484">
    <property type="entry name" value="beta and beta-prime subunits of DNA dependent RNA-polymerase"/>
    <property type="match status" value="1"/>
</dbReference>
<keyword id="KW-0240">DNA-directed RNA polymerase</keyword>
<keyword id="KW-0460">Magnesium</keyword>
<keyword id="KW-0479">Metal-binding</keyword>
<keyword id="KW-0548">Nucleotidyltransferase</keyword>
<keyword id="KW-1185">Reference proteome</keyword>
<keyword id="KW-0804">Transcription</keyword>
<keyword id="KW-0808">Transferase</keyword>
<keyword id="KW-0862">Zinc</keyword>
<reference key="1">
    <citation type="submission" date="2008-02" db="EMBL/GenBank/DDBJ databases">
        <title>Complete sequence of Synechococcus sp. PCC 7002.</title>
        <authorList>
            <person name="Li T."/>
            <person name="Zhao J."/>
            <person name="Zhao C."/>
            <person name="Liu Z."/>
            <person name="Zhao F."/>
            <person name="Marquardt J."/>
            <person name="Nomura C.T."/>
            <person name="Persson S."/>
            <person name="Detter J.C."/>
            <person name="Richardson P.M."/>
            <person name="Lanz C."/>
            <person name="Schuster S.C."/>
            <person name="Wang J."/>
            <person name="Li S."/>
            <person name="Huang X."/>
            <person name="Cai T."/>
            <person name="Yu Z."/>
            <person name="Luo J."/>
            <person name="Zhao J."/>
            <person name="Bryant D.A."/>
        </authorList>
    </citation>
    <scope>NUCLEOTIDE SEQUENCE [LARGE SCALE GENOMIC DNA]</scope>
    <source>
        <strain>ATCC 27264 / PCC 7002 / PR-6</strain>
    </source>
</reference>
<reference key="2">
    <citation type="submission" date="1996-04" db="EMBL/GenBank/DDBJ databases">
        <authorList>
            <person name="Palenik B."/>
            <person name="Swift H."/>
        </authorList>
    </citation>
    <scope>NUCLEOTIDE SEQUENCE [GENOMIC DNA] OF 38-240</scope>
</reference>
<protein>
    <recommendedName>
        <fullName evidence="1">DNA-directed RNA polymerase subunit gamma</fullName>
        <shortName evidence="1">RNAP subunit gamma</shortName>
        <ecNumber evidence="1">2.7.7.6</ecNumber>
    </recommendedName>
    <alternativeName>
        <fullName evidence="1">RNA polymerase subunit gamma</fullName>
    </alternativeName>
    <alternativeName>
        <fullName evidence="1">Transcriptase subunit gamma</fullName>
    </alternativeName>
</protein>
<feature type="chain" id="PRO_0000067851" description="DNA-directed RNA polymerase subunit gamma">
    <location>
        <begin position="1"/>
        <end position="636"/>
    </location>
</feature>
<feature type="binding site" evidence="1">
    <location>
        <position position="71"/>
    </location>
    <ligand>
        <name>Zn(2+)</name>
        <dbReference type="ChEBI" id="CHEBI:29105"/>
    </ligand>
</feature>
<feature type="binding site" evidence="1">
    <location>
        <position position="73"/>
    </location>
    <ligand>
        <name>Zn(2+)</name>
        <dbReference type="ChEBI" id="CHEBI:29105"/>
    </ligand>
</feature>
<feature type="binding site" evidence="1">
    <location>
        <position position="86"/>
    </location>
    <ligand>
        <name>Zn(2+)</name>
        <dbReference type="ChEBI" id="CHEBI:29105"/>
    </ligand>
</feature>
<feature type="binding site" evidence="1">
    <location>
        <position position="89"/>
    </location>
    <ligand>
        <name>Zn(2+)</name>
        <dbReference type="ChEBI" id="CHEBI:29105"/>
    </ligand>
</feature>
<feature type="binding site" evidence="1">
    <location>
        <position position="467"/>
    </location>
    <ligand>
        <name>Mg(2+)</name>
        <dbReference type="ChEBI" id="CHEBI:18420"/>
    </ligand>
</feature>
<feature type="binding site" evidence="1">
    <location>
        <position position="469"/>
    </location>
    <ligand>
        <name>Mg(2+)</name>
        <dbReference type="ChEBI" id="CHEBI:18420"/>
    </ligand>
</feature>
<feature type="binding site" evidence="1">
    <location>
        <position position="471"/>
    </location>
    <ligand>
        <name>Mg(2+)</name>
        <dbReference type="ChEBI" id="CHEBI:18420"/>
    </ligand>
</feature>